<evidence type="ECO:0000255" key="1">
    <source>
        <dbReference type="HAMAP-Rule" id="MF_01302"/>
    </source>
</evidence>
<evidence type="ECO:0000305" key="2"/>
<gene>
    <name evidence="1" type="primary">rpsH</name>
    <name type="ordered locus">SPAB_04267</name>
</gene>
<feature type="chain" id="PRO_1000085941" description="Small ribosomal subunit protein uS8">
    <location>
        <begin position="1"/>
        <end position="130"/>
    </location>
</feature>
<proteinExistence type="inferred from homology"/>
<keyword id="KW-0687">Ribonucleoprotein</keyword>
<keyword id="KW-0689">Ribosomal protein</keyword>
<keyword id="KW-0694">RNA-binding</keyword>
<keyword id="KW-0699">rRNA-binding</keyword>
<comment type="function">
    <text evidence="1">One of the primary rRNA binding proteins, it binds directly to 16S rRNA central domain where it helps coordinate assembly of the platform of the 30S subunit.</text>
</comment>
<comment type="subunit">
    <text evidence="1">Part of the 30S ribosomal subunit. Contacts proteins S5 and S12.</text>
</comment>
<comment type="similarity">
    <text evidence="1">Belongs to the universal ribosomal protein uS8 family.</text>
</comment>
<sequence length="130" mass="14127">MSMQDPIADMLTRIRNGQAANKAAVTMPSSKLKVAIANVLKEEGFIEDFKVEGDTKPELELTLKYFQGKAVVESIQRVSRPGLRIYKRKDELPKVMAGLGIAVVSTSKGVMTDRAARQAGLGGEIICYVA</sequence>
<protein>
    <recommendedName>
        <fullName evidence="1">Small ribosomal subunit protein uS8</fullName>
    </recommendedName>
    <alternativeName>
        <fullName evidence="2">30S ribosomal protein S8</fullName>
    </alternativeName>
</protein>
<organism>
    <name type="scientific">Salmonella paratyphi B (strain ATCC BAA-1250 / SPB7)</name>
    <dbReference type="NCBI Taxonomy" id="1016998"/>
    <lineage>
        <taxon>Bacteria</taxon>
        <taxon>Pseudomonadati</taxon>
        <taxon>Pseudomonadota</taxon>
        <taxon>Gammaproteobacteria</taxon>
        <taxon>Enterobacterales</taxon>
        <taxon>Enterobacteriaceae</taxon>
        <taxon>Salmonella</taxon>
    </lineage>
</organism>
<dbReference type="EMBL" id="CP000886">
    <property type="protein sequence ID" value="ABX69584.1"/>
    <property type="molecule type" value="Genomic_DNA"/>
</dbReference>
<dbReference type="RefSeq" id="WP_000062611.1">
    <property type="nucleotide sequence ID" value="NC_010102.1"/>
</dbReference>
<dbReference type="SMR" id="A9MSY4"/>
<dbReference type="GeneID" id="93778681"/>
<dbReference type="KEGG" id="spq:SPAB_04267"/>
<dbReference type="PATRIC" id="fig|1016998.12.peg.4013"/>
<dbReference type="HOGENOM" id="CLU_098428_0_0_6"/>
<dbReference type="BioCyc" id="SENT1016998:SPAB_RS17365-MONOMER"/>
<dbReference type="Proteomes" id="UP000008556">
    <property type="component" value="Chromosome"/>
</dbReference>
<dbReference type="GO" id="GO:1990904">
    <property type="term" value="C:ribonucleoprotein complex"/>
    <property type="evidence" value="ECO:0007669"/>
    <property type="project" value="UniProtKB-KW"/>
</dbReference>
<dbReference type="GO" id="GO:0005840">
    <property type="term" value="C:ribosome"/>
    <property type="evidence" value="ECO:0007669"/>
    <property type="project" value="UniProtKB-KW"/>
</dbReference>
<dbReference type="GO" id="GO:0019843">
    <property type="term" value="F:rRNA binding"/>
    <property type="evidence" value="ECO:0007669"/>
    <property type="project" value="UniProtKB-UniRule"/>
</dbReference>
<dbReference type="GO" id="GO:0003735">
    <property type="term" value="F:structural constituent of ribosome"/>
    <property type="evidence" value="ECO:0007669"/>
    <property type="project" value="InterPro"/>
</dbReference>
<dbReference type="GO" id="GO:0006412">
    <property type="term" value="P:translation"/>
    <property type="evidence" value="ECO:0007669"/>
    <property type="project" value="UniProtKB-UniRule"/>
</dbReference>
<dbReference type="FunFam" id="3.30.1370.30:FF:000003">
    <property type="entry name" value="30S ribosomal protein S8"/>
    <property type="match status" value="1"/>
</dbReference>
<dbReference type="FunFam" id="3.30.1490.10:FF:000001">
    <property type="entry name" value="30S ribosomal protein S8"/>
    <property type="match status" value="1"/>
</dbReference>
<dbReference type="Gene3D" id="3.30.1370.30">
    <property type="match status" value="1"/>
</dbReference>
<dbReference type="Gene3D" id="3.30.1490.10">
    <property type="match status" value="1"/>
</dbReference>
<dbReference type="HAMAP" id="MF_01302_B">
    <property type="entry name" value="Ribosomal_uS8_B"/>
    <property type="match status" value="1"/>
</dbReference>
<dbReference type="InterPro" id="IPR000630">
    <property type="entry name" value="Ribosomal_uS8"/>
</dbReference>
<dbReference type="InterPro" id="IPR047863">
    <property type="entry name" value="Ribosomal_uS8_CS"/>
</dbReference>
<dbReference type="InterPro" id="IPR035987">
    <property type="entry name" value="Ribosomal_uS8_sf"/>
</dbReference>
<dbReference type="NCBIfam" id="NF001109">
    <property type="entry name" value="PRK00136.1"/>
    <property type="match status" value="1"/>
</dbReference>
<dbReference type="PANTHER" id="PTHR11758">
    <property type="entry name" value="40S RIBOSOMAL PROTEIN S15A"/>
    <property type="match status" value="1"/>
</dbReference>
<dbReference type="Pfam" id="PF00410">
    <property type="entry name" value="Ribosomal_S8"/>
    <property type="match status" value="1"/>
</dbReference>
<dbReference type="SUPFAM" id="SSF56047">
    <property type="entry name" value="Ribosomal protein S8"/>
    <property type="match status" value="1"/>
</dbReference>
<dbReference type="PROSITE" id="PS00053">
    <property type="entry name" value="RIBOSOMAL_S8"/>
    <property type="match status" value="1"/>
</dbReference>
<accession>A9MSY4</accession>
<reference key="1">
    <citation type="submission" date="2007-11" db="EMBL/GenBank/DDBJ databases">
        <authorList>
            <consortium name="The Salmonella enterica serovar Paratyphi B Genome Sequencing Project"/>
            <person name="McClelland M."/>
            <person name="Sanderson E.K."/>
            <person name="Porwollik S."/>
            <person name="Spieth J."/>
            <person name="Clifton W.S."/>
            <person name="Fulton R."/>
            <person name="Cordes M."/>
            <person name="Wollam A."/>
            <person name="Shah N."/>
            <person name="Pepin K."/>
            <person name="Bhonagiri V."/>
            <person name="Nash W."/>
            <person name="Johnson M."/>
            <person name="Thiruvilangam P."/>
            <person name="Wilson R."/>
        </authorList>
    </citation>
    <scope>NUCLEOTIDE SEQUENCE [LARGE SCALE GENOMIC DNA]</scope>
    <source>
        <strain>ATCC BAA-1250 / SPB7</strain>
    </source>
</reference>
<name>RS8_SALPB</name>